<feature type="chain" id="PRO_1000204982" description="Trigger factor">
    <location>
        <begin position="1"/>
        <end position="438"/>
    </location>
</feature>
<feature type="domain" description="PPIase FKBP-type" evidence="1">
    <location>
        <begin position="160"/>
        <end position="231"/>
    </location>
</feature>
<feature type="region of interest" description="Disordered" evidence="2">
    <location>
        <begin position="407"/>
        <end position="438"/>
    </location>
</feature>
<feature type="compositionally biased region" description="Low complexity" evidence="2">
    <location>
        <begin position="418"/>
        <end position="427"/>
    </location>
</feature>
<proteinExistence type="inferred from homology"/>
<gene>
    <name evidence="1" type="primary">tig</name>
    <name type="ordered locus">Deide_05690</name>
</gene>
<protein>
    <recommendedName>
        <fullName evidence="1">Trigger factor</fullName>
        <shortName evidence="1">TF</shortName>
        <ecNumber evidence="1">5.2.1.8</ecNumber>
    </recommendedName>
    <alternativeName>
        <fullName evidence="1">PPIase</fullName>
    </alternativeName>
</protein>
<accession>C1D0N3</accession>
<name>TIG_DEIDV</name>
<reference key="1">
    <citation type="journal article" date="2009" name="PLoS Genet.">
        <title>Alliance of proteomics and genomics to unravel the specificities of Sahara bacterium Deinococcus deserti.</title>
        <authorList>
            <person name="de Groot A."/>
            <person name="Dulermo R."/>
            <person name="Ortet P."/>
            <person name="Blanchard L."/>
            <person name="Guerin P."/>
            <person name="Fernandez B."/>
            <person name="Vacherie B."/>
            <person name="Dossat C."/>
            <person name="Jolivet E."/>
            <person name="Siguier P."/>
            <person name="Chandler M."/>
            <person name="Barakat M."/>
            <person name="Dedieu A."/>
            <person name="Barbe V."/>
            <person name="Heulin T."/>
            <person name="Sommer S."/>
            <person name="Achouak W."/>
            <person name="Armengaud J."/>
        </authorList>
    </citation>
    <scope>NUCLEOTIDE SEQUENCE [LARGE SCALE GENOMIC DNA]</scope>
    <source>
        <strain>DSM 17065 / CIP 109153 / LMG 22923 / VCD115</strain>
    </source>
</reference>
<organism>
    <name type="scientific">Deinococcus deserti (strain DSM 17065 / CIP 109153 / LMG 22923 / VCD115)</name>
    <dbReference type="NCBI Taxonomy" id="546414"/>
    <lineage>
        <taxon>Bacteria</taxon>
        <taxon>Thermotogati</taxon>
        <taxon>Deinococcota</taxon>
        <taxon>Deinococci</taxon>
        <taxon>Deinococcales</taxon>
        <taxon>Deinococcaceae</taxon>
        <taxon>Deinococcus</taxon>
    </lineage>
</organism>
<keyword id="KW-0131">Cell cycle</keyword>
<keyword id="KW-0132">Cell division</keyword>
<keyword id="KW-0143">Chaperone</keyword>
<keyword id="KW-0963">Cytoplasm</keyword>
<keyword id="KW-0413">Isomerase</keyword>
<keyword id="KW-1185">Reference proteome</keyword>
<keyword id="KW-0697">Rotamase</keyword>
<dbReference type="EC" id="5.2.1.8" evidence="1"/>
<dbReference type="EMBL" id="CP001114">
    <property type="protein sequence ID" value="ACO45407.1"/>
    <property type="molecule type" value="Genomic_DNA"/>
</dbReference>
<dbReference type="RefSeq" id="WP_012692530.1">
    <property type="nucleotide sequence ID" value="NC_012526.1"/>
</dbReference>
<dbReference type="SMR" id="C1D0N3"/>
<dbReference type="STRING" id="546414.Deide_05690"/>
<dbReference type="PaxDb" id="546414-Deide_05690"/>
<dbReference type="KEGG" id="ddr:Deide_05690"/>
<dbReference type="eggNOG" id="COG0544">
    <property type="taxonomic scope" value="Bacteria"/>
</dbReference>
<dbReference type="HOGENOM" id="CLU_033058_3_1_0"/>
<dbReference type="OrthoDB" id="9767721at2"/>
<dbReference type="Proteomes" id="UP000002208">
    <property type="component" value="Chromosome"/>
</dbReference>
<dbReference type="GO" id="GO:0005737">
    <property type="term" value="C:cytoplasm"/>
    <property type="evidence" value="ECO:0007669"/>
    <property type="project" value="UniProtKB-SubCell"/>
</dbReference>
<dbReference type="GO" id="GO:0003755">
    <property type="term" value="F:peptidyl-prolyl cis-trans isomerase activity"/>
    <property type="evidence" value="ECO:0007669"/>
    <property type="project" value="UniProtKB-UniRule"/>
</dbReference>
<dbReference type="GO" id="GO:0044183">
    <property type="term" value="F:protein folding chaperone"/>
    <property type="evidence" value="ECO:0007669"/>
    <property type="project" value="TreeGrafter"/>
</dbReference>
<dbReference type="GO" id="GO:0043022">
    <property type="term" value="F:ribosome binding"/>
    <property type="evidence" value="ECO:0007669"/>
    <property type="project" value="TreeGrafter"/>
</dbReference>
<dbReference type="GO" id="GO:0051083">
    <property type="term" value="P:'de novo' cotranslational protein folding"/>
    <property type="evidence" value="ECO:0007669"/>
    <property type="project" value="TreeGrafter"/>
</dbReference>
<dbReference type="GO" id="GO:0051301">
    <property type="term" value="P:cell division"/>
    <property type="evidence" value="ECO:0007669"/>
    <property type="project" value="UniProtKB-KW"/>
</dbReference>
<dbReference type="GO" id="GO:0061077">
    <property type="term" value="P:chaperone-mediated protein folding"/>
    <property type="evidence" value="ECO:0007669"/>
    <property type="project" value="TreeGrafter"/>
</dbReference>
<dbReference type="GO" id="GO:0015031">
    <property type="term" value="P:protein transport"/>
    <property type="evidence" value="ECO:0007669"/>
    <property type="project" value="UniProtKB-UniRule"/>
</dbReference>
<dbReference type="GO" id="GO:0043335">
    <property type="term" value="P:protein unfolding"/>
    <property type="evidence" value="ECO:0007669"/>
    <property type="project" value="TreeGrafter"/>
</dbReference>
<dbReference type="Gene3D" id="3.10.50.40">
    <property type="match status" value="1"/>
</dbReference>
<dbReference type="Gene3D" id="3.30.70.1050">
    <property type="entry name" value="Trigger factor ribosome-binding domain"/>
    <property type="match status" value="1"/>
</dbReference>
<dbReference type="Gene3D" id="1.10.3120.10">
    <property type="entry name" value="Trigger factor, C-terminal domain"/>
    <property type="match status" value="1"/>
</dbReference>
<dbReference type="HAMAP" id="MF_00303">
    <property type="entry name" value="Trigger_factor_Tig"/>
    <property type="match status" value="1"/>
</dbReference>
<dbReference type="InterPro" id="IPR046357">
    <property type="entry name" value="PPIase_dom_sf"/>
</dbReference>
<dbReference type="InterPro" id="IPR005215">
    <property type="entry name" value="Trig_fac"/>
</dbReference>
<dbReference type="InterPro" id="IPR008880">
    <property type="entry name" value="Trigger_fac_C"/>
</dbReference>
<dbReference type="InterPro" id="IPR037041">
    <property type="entry name" value="Trigger_fac_C_sf"/>
</dbReference>
<dbReference type="InterPro" id="IPR008881">
    <property type="entry name" value="Trigger_fac_ribosome-bd_bac"/>
</dbReference>
<dbReference type="InterPro" id="IPR036611">
    <property type="entry name" value="Trigger_fac_ribosome-bd_sf"/>
</dbReference>
<dbReference type="InterPro" id="IPR027304">
    <property type="entry name" value="Trigger_fact/SurA_dom_sf"/>
</dbReference>
<dbReference type="NCBIfam" id="TIGR00115">
    <property type="entry name" value="tig"/>
    <property type="match status" value="1"/>
</dbReference>
<dbReference type="PANTHER" id="PTHR30560">
    <property type="entry name" value="TRIGGER FACTOR CHAPERONE AND PEPTIDYL-PROLYL CIS/TRANS ISOMERASE"/>
    <property type="match status" value="1"/>
</dbReference>
<dbReference type="PANTHER" id="PTHR30560:SF3">
    <property type="entry name" value="TRIGGER FACTOR-LIKE PROTEIN TIG, CHLOROPLASTIC"/>
    <property type="match status" value="1"/>
</dbReference>
<dbReference type="Pfam" id="PF05698">
    <property type="entry name" value="Trigger_C"/>
    <property type="match status" value="1"/>
</dbReference>
<dbReference type="Pfam" id="PF05697">
    <property type="entry name" value="Trigger_N"/>
    <property type="match status" value="1"/>
</dbReference>
<dbReference type="PIRSF" id="PIRSF003095">
    <property type="entry name" value="Trigger_factor"/>
    <property type="match status" value="1"/>
</dbReference>
<dbReference type="SUPFAM" id="SSF54534">
    <property type="entry name" value="FKBP-like"/>
    <property type="match status" value="1"/>
</dbReference>
<dbReference type="SUPFAM" id="SSF109998">
    <property type="entry name" value="Triger factor/SurA peptide-binding domain-like"/>
    <property type="match status" value="1"/>
</dbReference>
<dbReference type="SUPFAM" id="SSF102735">
    <property type="entry name" value="Trigger factor ribosome-binding domain"/>
    <property type="match status" value="1"/>
</dbReference>
<comment type="function">
    <text evidence="1">Involved in protein export. Acts as a chaperone by maintaining the newly synthesized protein in an open conformation. Functions as a peptidyl-prolyl cis-trans isomerase.</text>
</comment>
<comment type="catalytic activity">
    <reaction evidence="1">
        <text>[protein]-peptidylproline (omega=180) = [protein]-peptidylproline (omega=0)</text>
        <dbReference type="Rhea" id="RHEA:16237"/>
        <dbReference type="Rhea" id="RHEA-COMP:10747"/>
        <dbReference type="Rhea" id="RHEA-COMP:10748"/>
        <dbReference type="ChEBI" id="CHEBI:83833"/>
        <dbReference type="ChEBI" id="CHEBI:83834"/>
        <dbReference type="EC" id="5.2.1.8"/>
    </reaction>
</comment>
<comment type="subcellular location">
    <subcellularLocation>
        <location>Cytoplasm</location>
    </subcellularLocation>
    <text evidence="1">About half TF is bound to the ribosome near the polypeptide exit tunnel while the other half is free in the cytoplasm.</text>
</comment>
<comment type="domain">
    <text evidence="1">Consists of 3 domains; the N-terminus binds the ribosome, the middle domain has PPIase activity, while the C-terminus has intrinsic chaperone activity on its own.</text>
</comment>
<comment type="similarity">
    <text evidence="1">Belongs to the FKBP-type PPIase family. Tig subfamily.</text>
</comment>
<sequence>MAELISREGNKVEFKVAVPAAEVNRAYEQVWAGLARDVRVPGFRPGKAPRKVIEGRVGKGYVEQEVRDRLLQVHYPQAARELKLSLVDATIDPQDLNNGKDFTFNVRGETYPEVTLGDWSDLKLEATSPEITDDVLNRTLSDLQERNATFESVDRAIEASDQVTIEEQGEDGGTYPVYLDVAEAHVRDALLGKNKGDTVEITVPAHQHGDHEHAEHTVTVKIMDVKTKQLQELNDEFASSLNFESLDRLRADLRNELQRRAQQEGDNARREEFVAHLTERMQADIPQALLERRREAMMQEIQDDLSRQGVKWSEYETFMKEQGKLDEFMADLSKNAETRVKRDLALEKLAEDLKVQVSDAEFNQTMTMLAQANGLSPEQLSKQLGPNGINSYYASIVRERALQQALAQLSGPQAETVAADQGEQQAEGQEESAEKSEE</sequence>
<evidence type="ECO:0000255" key="1">
    <source>
        <dbReference type="HAMAP-Rule" id="MF_00303"/>
    </source>
</evidence>
<evidence type="ECO:0000256" key="2">
    <source>
        <dbReference type="SAM" id="MobiDB-lite"/>
    </source>
</evidence>